<comment type="function">
    <text evidence="1">Sulfur carrier protein which probably makes part of a sulfur-relay system.</text>
</comment>
<comment type="subcellular location">
    <subcellularLocation>
        <location evidence="1">Cytoplasm</location>
    </subcellularLocation>
</comment>
<comment type="similarity">
    <text evidence="1">Belongs to the sulfur carrier protein TusA family.</text>
</comment>
<protein>
    <recommendedName>
        <fullName evidence="1">Sulfur carrier protein TusA</fullName>
    </recommendedName>
</protein>
<gene>
    <name evidence="1" type="primary">tusA</name>
    <name type="ordered locus">PA14_44270</name>
</gene>
<sequence length="79" mass="8865">MTHSVDAILDATGLNCPEPVMMLHNKVRDLAPGGLLKVIATDPSTRRDIPKFCVFLGHELVEQQEEAGTYLYWIRKKAD</sequence>
<feature type="chain" id="PRO_1000050019" description="Sulfur carrier protein TusA">
    <location>
        <begin position="1"/>
        <end position="79"/>
    </location>
</feature>
<feature type="active site" description="Cysteine persulfide intermediate" evidence="1">
    <location>
        <position position="16"/>
    </location>
</feature>
<organism>
    <name type="scientific">Pseudomonas aeruginosa (strain UCBPP-PA14)</name>
    <dbReference type="NCBI Taxonomy" id="208963"/>
    <lineage>
        <taxon>Bacteria</taxon>
        <taxon>Pseudomonadati</taxon>
        <taxon>Pseudomonadota</taxon>
        <taxon>Gammaproteobacteria</taxon>
        <taxon>Pseudomonadales</taxon>
        <taxon>Pseudomonadaceae</taxon>
        <taxon>Pseudomonas</taxon>
    </lineage>
</organism>
<reference key="1">
    <citation type="journal article" date="2006" name="Genome Biol.">
        <title>Genomic analysis reveals that Pseudomonas aeruginosa virulence is combinatorial.</title>
        <authorList>
            <person name="Lee D.G."/>
            <person name="Urbach J.M."/>
            <person name="Wu G."/>
            <person name="Liberati N.T."/>
            <person name="Feinbaum R.L."/>
            <person name="Miyata S."/>
            <person name="Diggins L.T."/>
            <person name="He J."/>
            <person name="Saucier M."/>
            <person name="Deziel E."/>
            <person name="Friedman L."/>
            <person name="Li L."/>
            <person name="Grills G."/>
            <person name="Montgomery K."/>
            <person name="Kucherlapati R."/>
            <person name="Rahme L.G."/>
            <person name="Ausubel F.M."/>
        </authorList>
    </citation>
    <scope>NUCLEOTIDE SEQUENCE [LARGE SCALE GENOMIC DNA]</scope>
    <source>
        <strain>UCBPP-PA14</strain>
    </source>
</reference>
<keyword id="KW-0963">Cytoplasm</keyword>
<evidence type="ECO:0000255" key="1">
    <source>
        <dbReference type="HAMAP-Rule" id="MF_00413"/>
    </source>
</evidence>
<accession>Q02K47</accession>
<dbReference type="EMBL" id="CP000438">
    <property type="protein sequence ID" value="ABJ10743.1"/>
    <property type="molecule type" value="Genomic_DNA"/>
</dbReference>
<dbReference type="RefSeq" id="WP_003105999.1">
    <property type="nucleotide sequence ID" value="NZ_CP034244.1"/>
</dbReference>
<dbReference type="SMR" id="Q02K47"/>
<dbReference type="KEGG" id="pau:PA14_44270"/>
<dbReference type="PseudoCAP" id="PA14_44270"/>
<dbReference type="HOGENOM" id="CLU_165255_5_1_6"/>
<dbReference type="BioCyc" id="PAER208963:G1G74-3713-MONOMER"/>
<dbReference type="Proteomes" id="UP000000653">
    <property type="component" value="Chromosome"/>
</dbReference>
<dbReference type="GO" id="GO:0005737">
    <property type="term" value="C:cytoplasm"/>
    <property type="evidence" value="ECO:0007669"/>
    <property type="project" value="UniProtKB-SubCell"/>
</dbReference>
<dbReference type="GO" id="GO:0097163">
    <property type="term" value="F:sulfur carrier activity"/>
    <property type="evidence" value="ECO:0007669"/>
    <property type="project" value="UniProtKB-UniRule"/>
</dbReference>
<dbReference type="GO" id="GO:0002143">
    <property type="term" value="P:tRNA wobble position uridine thiolation"/>
    <property type="evidence" value="ECO:0007669"/>
    <property type="project" value="InterPro"/>
</dbReference>
<dbReference type="CDD" id="cd03423">
    <property type="entry name" value="SirA"/>
    <property type="match status" value="1"/>
</dbReference>
<dbReference type="Gene3D" id="3.30.110.40">
    <property type="entry name" value="TusA-like domain"/>
    <property type="match status" value="1"/>
</dbReference>
<dbReference type="HAMAP" id="MF_00413">
    <property type="entry name" value="Thiourid_synth_A"/>
    <property type="match status" value="1"/>
</dbReference>
<dbReference type="InterPro" id="IPR022931">
    <property type="entry name" value="Sulphur_carrier_TusA"/>
</dbReference>
<dbReference type="InterPro" id="IPR001455">
    <property type="entry name" value="TusA-like"/>
</dbReference>
<dbReference type="InterPro" id="IPR036868">
    <property type="entry name" value="TusA-like_sf"/>
</dbReference>
<dbReference type="NCBIfam" id="NF001423">
    <property type="entry name" value="PRK00299.1"/>
    <property type="match status" value="1"/>
</dbReference>
<dbReference type="PANTHER" id="PTHR33279:SF2">
    <property type="entry name" value="SULFUR CARRIER PROTEIN TUSA"/>
    <property type="match status" value="1"/>
</dbReference>
<dbReference type="PANTHER" id="PTHR33279">
    <property type="entry name" value="SULFUR CARRIER PROTEIN YEDF-RELATED"/>
    <property type="match status" value="1"/>
</dbReference>
<dbReference type="Pfam" id="PF01206">
    <property type="entry name" value="TusA"/>
    <property type="match status" value="1"/>
</dbReference>
<dbReference type="SUPFAM" id="SSF64307">
    <property type="entry name" value="SirA-like"/>
    <property type="match status" value="1"/>
</dbReference>
<dbReference type="PROSITE" id="PS01148">
    <property type="entry name" value="UPF0033"/>
    <property type="match status" value="1"/>
</dbReference>
<proteinExistence type="inferred from homology"/>
<name>TUSA_PSEAB</name>